<accession>Q9XD74</accession>
<comment type="function">
    <text>Destroys superoxide anion radicals which are normally produced within the cells and which are toxic to biological systems.</text>
</comment>
<comment type="catalytic activity">
    <reaction>
        <text>2 superoxide + 2 H(+) = H2O2 + O2</text>
        <dbReference type="Rhea" id="RHEA:20696"/>
        <dbReference type="ChEBI" id="CHEBI:15378"/>
        <dbReference type="ChEBI" id="CHEBI:15379"/>
        <dbReference type="ChEBI" id="CHEBI:16240"/>
        <dbReference type="ChEBI" id="CHEBI:18421"/>
        <dbReference type="EC" id="1.15.1.1"/>
    </reaction>
</comment>
<comment type="cofactor">
    <cofactor evidence="1">
        <name>Mn(2+)</name>
        <dbReference type="ChEBI" id="CHEBI:29035"/>
    </cofactor>
    <text evidence="1">Binds 1 Mn(2+) ion per subunit.</text>
</comment>
<comment type="subunit">
    <text>Homodimer.</text>
</comment>
<comment type="similarity">
    <text evidence="2">Belongs to the iron/manganese superoxide dismutase family.</text>
</comment>
<gene>
    <name type="primary">sodB</name>
    <name type="synonym">sodA</name>
    <name type="ordered locus">R00973</name>
    <name type="ORF">SMc00043</name>
</gene>
<organism>
    <name type="scientific">Rhizobium meliloti (strain 1021)</name>
    <name type="common">Ensifer meliloti</name>
    <name type="synonym">Sinorhizobium meliloti</name>
    <dbReference type="NCBI Taxonomy" id="266834"/>
    <lineage>
        <taxon>Bacteria</taxon>
        <taxon>Pseudomonadati</taxon>
        <taxon>Pseudomonadota</taxon>
        <taxon>Alphaproteobacteria</taxon>
        <taxon>Hyphomicrobiales</taxon>
        <taxon>Rhizobiaceae</taxon>
        <taxon>Sinorhizobium/Ensifer group</taxon>
        <taxon>Sinorhizobium</taxon>
    </lineage>
</organism>
<dbReference type="EC" id="1.15.1.1"/>
<dbReference type="EMBL" id="AF110770">
    <property type="protein sequence ID" value="AAD40579.1"/>
    <property type="molecule type" value="Genomic_DNA"/>
</dbReference>
<dbReference type="EMBL" id="AL591688">
    <property type="protein sequence ID" value="CAC45545.1"/>
    <property type="molecule type" value="Genomic_DNA"/>
</dbReference>
<dbReference type="RefSeq" id="NP_385079.1">
    <property type="nucleotide sequence ID" value="NC_003047.1"/>
</dbReference>
<dbReference type="RefSeq" id="WP_010968960.1">
    <property type="nucleotide sequence ID" value="NC_003047.1"/>
</dbReference>
<dbReference type="SMR" id="Q9XD74"/>
<dbReference type="EnsemblBacteria" id="CAC45545">
    <property type="protein sequence ID" value="CAC45545"/>
    <property type="gene ID" value="SMc00043"/>
</dbReference>
<dbReference type="KEGG" id="sme:SMc00043"/>
<dbReference type="PATRIC" id="fig|266834.11.peg.2373"/>
<dbReference type="eggNOG" id="COG0605">
    <property type="taxonomic scope" value="Bacteria"/>
</dbReference>
<dbReference type="HOGENOM" id="CLU_031625_0_0_5"/>
<dbReference type="OrthoDB" id="9803125at2"/>
<dbReference type="Proteomes" id="UP000001976">
    <property type="component" value="Chromosome"/>
</dbReference>
<dbReference type="GO" id="GO:0046872">
    <property type="term" value="F:metal ion binding"/>
    <property type="evidence" value="ECO:0007669"/>
    <property type="project" value="UniProtKB-KW"/>
</dbReference>
<dbReference type="GO" id="GO:0004784">
    <property type="term" value="F:superoxide dismutase activity"/>
    <property type="evidence" value="ECO:0007669"/>
    <property type="project" value="UniProtKB-EC"/>
</dbReference>
<dbReference type="Gene3D" id="1.10.287.990">
    <property type="entry name" value="Fe,Mn superoxide dismutase (SOD) domain"/>
    <property type="match status" value="1"/>
</dbReference>
<dbReference type="Gene3D" id="3.55.40.20">
    <property type="entry name" value="Iron/manganese superoxide dismutase, C-terminal domain"/>
    <property type="match status" value="1"/>
</dbReference>
<dbReference type="InterPro" id="IPR001189">
    <property type="entry name" value="Mn/Fe_SOD"/>
</dbReference>
<dbReference type="InterPro" id="IPR019833">
    <property type="entry name" value="Mn/Fe_SOD_BS"/>
</dbReference>
<dbReference type="InterPro" id="IPR019832">
    <property type="entry name" value="Mn/Fe_SOD_C"/>
</dbReference>
<dbReference type="InterPro" id="IPR019831">
    <property type="entry name" value="Mn/Fe_SOD_N"/>
</dbReference>
<dbReference type="InterPro" id="IPR036324">
    <property type="entry name" value="Mn/Fe_SOD_N_sf"/>
</dbReference>
<dbReference type="InterPro" id="IPR036314">
    <property type="entry name" value="SOD_C_sf"/>
</dbReference>
<dbReference type="PANTHER" id="PTHR42769">
    <property type="entry name" value="SUPEROXIDE DISMUTASE"/>
    <property type="match status" value="1"/>
</dbReference>
<dbReference type="PANTHER" id="PTHR42769:SF3">
    <property type="entry name" value="SUPEROXIDE DISMUTASE [FE] 2, CHLOROPLASTIC"/>
    <property type="match status" value="1"/>
</dbReference>
<dbReference type="Pfam" id="PF02777">
    <property type="entry name" value="Sod_Fe_C"/>
    <property type="match status" value="1"/>
</dbReference>
<dbReference type="Pfam" id="PF00081">
    <property type="entry name" value="Sod_Fe_N"/>
    <property type="match status" value="1"/>
</dbReference>
<dbReference type="PIRSF" id="PIRSF000349">
    <property type="entry name" value="SODismutase"/>
    <property type="match status" value="1"/>
</dbReference>
<dbReference type="PRINTS" id="PR01703">
    <property type="entry name" value="MNSODISMTASE"/>
</dbReference>
<dbReference type="SUPFAM" id="SSF54719">
    <property type="entry name" value="Fe,Mn superoxide dismutase (SOD), C-terminal domain"/>
    <property type="match status" value="1"/>
</dbReference>
<dbReference type="SUPFAM" id="SSF46609">
    <property type="entry name" value="Fe,Mn superoxide dismutase (SOD), N-terminal domain"/>
    <property type="match status" value="1"/>
</dbReference>
<dbReference type="PROSITE" id="PS00088">
    <property type="entry name" value="SOD_MN"/>
    <property type="match status" value="1"/>
</dbReference>
<feature type="initiator methionine" description="Removed" evidence="1">
    <location>
        <position position="1"/>
    </location>
</feature>
<feature type="chain" id="PRO_0000159997" description="Superoxide dismutase [Mn]">
    <location>
        <begin position="2"/>
        <end position="200"/>
    </location>
</feature>
<feature type="binding site" evidence="1">
    <location>
        <position position="27"/>
    </location>
    <ligand>
        <name>Mn(2+)</name>
        <dbReference type="ChEBI" id="CHEBI:29035"/>
    </ligand>
</feature>
<feature type="binding site" evidence="1">
    <location>
        <position position="77"/>
    </location>
    <ligand>
        <name>Mn(2+)</name>
        <dbReference type="ChEBI" id="CHEBI:29035"/>
    </ligand>
</feature>
<feature type="binding site" evidence="1">
    <location>
        <position position="160"/>
    </location>
    <ligand>
        <name>Mn(2+)</name>
        <dbReference type="ChEBI" id="CHEBI:29035"/>
    </ligand>
</feature>
<feature type="binding site" evidence="1">
    <location>
        <position position="164"/>
    </location>
    <ligand>
        <name>Mn(2+)</name>
        <dbReference type="ChEBI" id="CHEBI:29035"/>
    </ligand>
</feature>
<protein>
    <recommendedName>
        <fullName>Superoxide dismutase [Mn]</fullName>
        <ecNumber>1.15.1.1</ecNumber>
    </recommendedName>
</protein>
<name>SODF_RHIME</name>
<reference key="1">
    <citation type="journal article" date="1999" name="J. Bacteriol.">
        <title>Characterization of an atypical superoxide dismutase from Sinorhizobium meliloti.</title>
        <authorList>
            <person name="Santos R."/>
            <person name="Bocquet S."/>
            <person name="Puppo A."/>
            <person name="Touati D."/>
        </authorList>
    </citation>
    <scope>NUCLEOTIDE SEQUENCE [GENOMIC DNA]</scope>
    <scope>CHARACTERIZATION</scope>
    <source>
        <strain>Rm5000</strain>
    </source>
</reference>
<reference key="2">
    <citation type="journal article" date="2001" name="Proc. Natl. Acad. Sci. U.S.A.">
        <title>Analysis of the chromosome sequence of the legume symbiont Sinorhizobium meliloti strain 1021.</title>
        <authorList>
            <person name="Capela D."/>
            <person name="Barloy-Hubler F."/>
            <person name="Gouzy J."/>
            <person name="Bothe G."/>
            <person name="Ampe F."/>
            <person name="Batut J."/>
            <person name="Boistard P."/>
            <person name="Becker A."/>
            <person name="Boutry M."/>
            <person name="Cadieu E."/>
            <person name="Dreano S."/>
            <person name="Gloux S."/>
            <person name="Godrie T."/>
            <person name="Goffeau A."/>
            <person name="Kahn D."/>
            <person name="Kiss E."/>
            <person name="Lelaure V."/>
            <person name="Masuy D."/>
            <person name="Pohl T."/>
            <person name="Portetelle D."/>
            <person name="Puehler A."/>
            <person name="Purnelle B."/>
            <person name="Ramsperger U."/>
            <person name="Renard C."/>
            <person name="Thebault P."/>
            <person name="Vandenbol M."/>
            <person name="Weidner S."/>
            <person name="Galibert F."/>
        </authorList>
    </citation>
    <scope>NUCLEOTIDE SEQUENCE [LARGE SCALE GENOMIC DNA]</scope>
    <source>
        <strain>1021</strain>
    </source>
</reference>
<reference key="3">
    <citation type="journal article" date="2001" name="Science">
        <title>The composite genome of the legume symbiont Sinorhizobium meliloti.</title>
        <authorList>
            <person name="Galibert F."/>
            <person name="Finan T.M."/>
            <person name="Long S.R."/>
            <person name="Puehler A."/>
            <person name="Abola P."/>
            <person name="Ampe F."/>
            <person name="Barloy-Hubler F."/>
            <person name="Barnett M.J."/>
            <person name="Becker A."/>
            <person name="Boistard P."/>
            <person name="Bothe G."/>
            <person name="Boutry M."/>
            <person name="Bowser L."/>
            <person name="Buhrmester J."/>
            <person name="Cadieu E."/>
            <person name="Capela D."/>
            <person name="Chain P."/>
            <person name="Cowie A."/>
            <person name="Davis R.W."/>
            <person name="Dreano S."/>
            <person name="Federspiel N.A."/>
            <person name="Fisher R.F."/>
            <person name="Gloux S."/>
            <person name="Godrie T."/>
            <person name="Goffeau A."/>
            <person name="Golding B."/>
            <person name="Gouzy J."/>
            <person name="Gurjal M."/>
            <person name="Hernandez-Lucas I."/>
            <person name="Hong A."/>
            <person name="Huizar L."/>
            <person name="Hyman R.W."/>
            <person name="Jones T."/>
            <person name="Kahn D."/>
            <person name="Kahn M.L."/>
            <person name="Kalman S."/>
            <person name="Keating D.H."/>
            <person name="Kiss E."/>
            <person name="Komp C."/>
            <person name="Lelaure V."/>
            <person name="Masuy D."/>
            <person name="Palm C."/>
            <person name="Peck M.C."/>
            <person name="Pohl T.M."/>
            <person name="Portetelle D."/>
            <person name="Purnelle B."/>
            <person name="Ramsperger U."/>
            <person name="Surzycki R."/>
            <person name="Thebault P."/>
            <person name="Vandenbol M."/>
            <person name="Vorhoelter F.J."/>
            <person name="Weidner S."/>
            <person name="Wells D.H."/>
            <person name="Wong K."/>
            <person name="Yeh K.-C."/>
            <person name="Batut J."/>
        </authorList>
    </citation>
    <scope>NUCLEOTIDE SEQUENCE [LARGE SCALE GENOMIC DNA]</scope>
    <source>
        <strain>1021</strain>
    </source>
</reference>
<keyword id="KW-0464">Manganese</keyword>
<keyword id="KW-0479">Metal-binding</keyword>
<keyword id="KW-0560">Oxidoreductase</keyword>
<keyword id="KW-1185">Reference proteome</keyword>
<evidence type="ECO:0000250" key="1"/>
<evidence type="ECO:0000305" key="2"/>
<sequence length="200" mass="22430">MAFELPNLPYDYDALAPYMSRETLEYHHDKHHLAYVTNGNKLAEEAGLSDLSLEDIVKKSYGTNQPLFNNAGQHYNHVHFWKWMKKGGGGTSLPGKLDAAIKSDLGGYDKFRADFSAAGAGQFGSGWAWLSVKNGKLEISKTPNGENPLVHGATPILGVDVWEHSYYIDYRNARPKYLEAFVDNLINWDYVLELYEAAAK</sequence>
<proteinExistence type="evidence at protein level"/>